<protein>
    <recommendedName>
        <fullName evidence="1">UDP-N-acetylglucosamine--N-acetylmuramyl-(pentapeptide) pyrophosphoryl-undecaprenol N-acetylglucosamine transferase</fullName>
        <ecNumber evidence="1">2.4.1.227</ecNumber>
    </recommendedName>
    <alternativeName>
        <fullName evidence="1">Undecaprenyl-PP-MurNAc-pentapeptide-UDPGlcNAc GlcNAc transferase</fullName>
    </alternativeName>
</protein>
<name>MURG_BACLD</name>
<feature type="chain" id="PRO_0000225026" description="UDP-N-acetylglucosamine--N-acetylmuramyl-(pentapeptide) pyrophosphoryl-undecaprenol N-acetylglucosamine transferase">
    <location>
        <begin position="1"/>
        <end position="366"/>
    </location>
</feature>
<feature type="binding site" evidence="1">
    <location>
        <begin position="10"/>
        <end position="12"/>
    </location>
    <ligand>
        <name>UDP-N-acetyl-alpha-D-glucosamine</name>
        <dbReference type="ChEBI" id="CHEBI:57705"/>
    </ligand>
</feature>
<feature type="binding site" evidence="1">
    <location>
        <position position="124"/>
    </location>
    <ligand>
        <name>UDP-N-acetyl-alpha-D-glucosamine</name>
        <dbReference type="ChEBI" id="CHEBI:57705"/>
    </ligand>
</feature>
<feature type="binding site" evidence="1">
    <location>
        <position position="195"/>
    </location>
    <ligand>
        <name>UDP-N-acetyl-alpha-D-glucosamine</name>
        <dbReference type="ChEBI" id="CHEBI:57705"/>
    </ligand>
</feature>
<feature type="binding site" evidence="1">
    <location>
        <position position="295"/>
    </location>
    <ligand>
        <name>UDP-N-acetyl-alpha-D-glucosamine</name>
        <dbReference type="ChEBI" id="CHEBI:57705"/>
    </ligand>
</feature>
<sequence length="366" mass="40083">MRIVVSGGGTGGHIYPALAFIKEVKRHHEDVEFLYIGTEKGLEKNIVEREGIPFKAIEITGFKRKLSFENVKTVMRFLKGVKECKEELKRFKPDAVIGTGGYVCGPVVYAASKLGIPTIIHEQNSLPGLTNKFLSKYVDKVAICFDEAKTHFPAEKVVFTGNPRASEVVSIKGGRSLTALGLAEGKKTVLIFGGSRGAAPINEAVIAMQNELKKRDYQVLYVTGEVHYDKVTAALEKEGAAPNMVVQPFLHQMPEYLKAFDVVVGRAGATTIAEITALGIPSVLIPSPYVTANHQEVNARSLGEQNAAVVLKESELNGDRLIQAIDHILQDEKTLEEMKIRAKSLGVPDAAERLYNVLKELKHHAK</sequence>
<dbReference type="EC" id="2.4.1.227" evidence="1"/>
<dbReference type="EMBL" id="AE017333">
    <property type="protein sequence ID" value="AAU40634.1"/>
    <property type="molecule type" value="Genomic_DNA"/>
</dbReference>
<dbReference type="EMBL" id="CP000002">
    <property type="protein sequence ID" value="AAU23277.1"/>
    <property type="molecule type" value="Genomic_DNA"/>
</dbReference>
<dbReference type="RefSeq" id="WP_003181548.1">
    <property type="nucleotide sequence ID" value="NC_006322.1"/>
</dbReference>
<dbReference type="SMR" id="Q65JY0"/>
<dbReference type="STRING" id="279010.BL02243"/>
<dbReference type="CAZy" id="GT28">
    <property type="family name" value="Glycosyltransferase Family 28"/>
</dbReference>
<dbReference type="GeneID" id="92861667"/>
<dbReference type="KEGG" id="bld:BLi01739"/>
<dbReference type="KEGG" id="bli:BL02243"/>
<dbReference type="eggNOG" id="COG0707">
    <property type="taxonomic scope" value="Bacteria"/>
</dbReference>
<dbReference type="HOGENOM" id="CLU_037404_0_1_9"/>
<dbReference type="UniPathway" id="UPA00219"/>
<dbReference type="Proteomes" id="UP000000606">
    <property type="component" value="Chromosome"/>
</dbReference>
<dbReference type="GO" id="GO:0005886">
    <property type="term" value="C:plasma membrane"/>
    <property type="evidence" value="ECO:0007669"/>
    <property type="project" value="UniProtKB-SubCell"/>
</dbReference>
<dbReference type="GO" id="GO:0051991">
    <property type="term" value="F:UDP-N-acetyl-D-glucosamine:N-acetylmuramoyl-L-alanyl-D-glutamyl-meso-2,6-diaminopimelyl-D-alanyl-D-alanine-diphosphoundecaprenol 4-beta-N-acetylglucosaminlytransferase activity"/>
    <property type="evidence" value="ECO:0007669"/>
    <property type="project" value="RHEA"/>
</dbReference>
<dbReference type="GO" id="GO:0050511">
    <property type="term" value="F:undecaprenyldiphospho-muramoylpentapeptide beta-N-acetylglucosaminyltransferase activity"/>
    <property type="evidence" value="ECO:0007669"/>
    <property type="project" value="UniProtKB-UniRule"/>
</dbReference>
<dbReference type="GO" id="GO:0005975">
    <property type="term" value="P:carbohydrate metabolic process"/>
    <property type="evidence" value="ECO:0007669"/>
    <property type="project" value="InterPro"/>
</dbReference>
<dbReference type="GO" id="GO:0051301">
    <property type="term" value="P:cell division"/>
    <property type="evidence" value="ECO:0007669"/>
    <property type="project" value="UniProtKB-KW"/>
</dbReference>
<dbReference type="GO" id="GO:0071555">
    <property type="term" value="P:cell wall organization"/>
    <property type="evidence" value="ECO:0007669"/>
    <property type="project" value="UniProtKB-KW"/>
</dbReference>
<dbReference type="GO" id="GO:0030259">
    <property type="term" value="P:lipid glycosylation"/>
    <property type="evidence" value="ECO:0007669"/>
    <property type="project" value="UniProtKB-UniRule"/>
</dbReference>
<dbReference type="GO" id="GO:0009252">
    <property type="term" value="P:peptidoglycan biosynthetic process"/>
    <property type="evidence" value="ECO:0007669"/>
    <property type="project" value="UniProtKB-UniRule"/>
</dbReference>
<dbReference type="GO" id="GO:0008360">
    <property type="term" value="P:regulation of cell shape"/>
    <property type="evidence" value="ECO:0007669"/>
    <property type="project" value="UniProtKB-KW"/>
</dbReference>
<dbReference type="CDD" id="cd03785">
    <property type="entry name" value="GT28_MurG"/>
    <property type="match status" value="1"/>
</dbReference>
<dbReference type="Gene3D" id="3.40.50.2000">
    <property type="entry name" value="Glycogen Phosphorylase B"/>
    <property type="match status" value="2"/>
</dbReference>
<dbReference type="HAMAP" id="MF_00033">
    <property type="entry name" value="MurG"/>
    <property type="match status" value="1"/>
</dbReference>
<dbReference type="InterPro" id="IPR006009">
    <property type="entry name" value="GlcNAc_MurG"/>
</dbReference>
<dbReference type="InterPro" id="IPR007235">
    <property type="entry name" value="Glyco_trans_28_C"/>
</dbReference>
<dbReference type="InterPro" id="IPR004276">
    <property type="entry name" value="GlycoTrans_28_N"/>
</dbReference>
<dbReference type="NCBIfam" id="TIGR01133">
    <property type="entry name" value="murG"/>
    <property type="match status" value="1"/>
</dbReference>
<dbReference type="PANTHER" id="PTHR21015:SF22">
    <property type="entry name" value="GLYCOSYLTRANSFERASE"/>
    <property type="match status" value="1"/>
</dbReference>
<dbReference type="PANTHER" id="PTHR21015">
    <property type="entry name" value="UDP-N-ACETYLGLUCOSAMINE--N-ACETYLMURAMYL-(PENTAPEPTIDE) PYROPHOSPHORYL-UNDECAPRENOL N-ACETYLGLUCOSAMINE TRANSFERASE 1"/>
    <property type="match status" value="1"/>
</dbReference>
<dbReference type="Pfam" id="PF04101">
    <property type="entry name" value="Glyco_tran_28_C"/>
    <property type="match status" value="1"/>
</dbReference>
<dbReference type="Pfam" id="PF03033">
    <property type="entry name" value="Glyco_transf_28"/>
    <property type="match status" value="1"/>
</dbReference>
<dbReference type="SUPFAM" id="SSF53756">
    <property type="entry name" value="UDP-Glycosyltransferase/glycogen phosphorylase"/>
    <property type="match status" value="1"/>
</dbReference>
<proteinExistence type="inferred from homology"/>
<gene>
    <name evidence="1" type="primary">murG</name>
    <name type="ordered locus">BLi01739</name>
    <name type="ordered locus">BL02243</name>
</gene>
<comment type="function">
    <text evidence="1">Cell wall formation. Catalyzes the transfer of a GlcNAc subunit on undecaprenyl-pyrophosphoryl-MurNAc-pentapeptide (lipid intermediate I) to form undecaprenyl-pyrophosphoryl-MurNAc-(pentapeptide)GlcNAc (lipid intermediate II).</text>
</comment>
<comment type="catalytic activity">
    <reaction evidence="1">
        <text>di-trans,octa-cis-undecaprenyl diphospho-N-acetyl-alpha-D-muramoyl-L-alanyl-D-glutamyl-meso-2,6-diaminopimeloyl-D-alanyl-D-alanine + UDP-N-acetyl-alpha-D-glucosamine = di-trans,octa-cis-undecaprenyl diphospho-[N-acetyl-alpha-D-glucosaminyl-(1-&gt;4)]-N-acetyl-alpha-D-muramoyl-L-alanyl-D-glutamyl-meso-2,6-diaminopimeloyl-D-alanyl-D-alanine + UDP + H(+)</text>
        <dbReference type="Rhea" id="RHEA:31227"/>
        <dbReference type="ChEBI" id="CHEBI:15378"/>
        <dbReference type="ChEBI" id="CHEBI:57705"/>
        <dbReference type="ChEBI" id="CHEBI:58223"/>
        <dbReference type="ChEBI" id="CHEBI:61387"/>
        <dbReference type="ChEBI" id="CHEBI:61388"/>
        <dbReference type="EC" id="2.4.1.227"/>
    </reaction>
</comment>
<comment type="pathway">
    <text evidence="1">Cell wall biogenesis; peptidoglycan biosynthesis.</text>
</comment>
<comment type="subcellular location">
    <subcellularLocation>
        <location evidence="1">Cell membrane</location>
        <topology evidence="1">Peripheral membrane protein</topology>
        <orientation evidence="1">Cytoplasmic side</orientation>
    </subcellularLocation>
</comment>
<comment type="similarity">
    <text evidence="1">Belongs to the glycosyltransferase 28 family. MurG subfamily.</text>
</comment>
<accession>Q65JY0</accession>
<accession>Q62VD1</accession>
<evidence type="ECO:0000255" key="1">
    <source>
        <dbReference type="HAMAP-Rule" id="MF_00033"/>
    </source>
</evidence>
<reference key="1">
    <citation type="journal article" date="2004" name="J. Mol. Microbiol. Biotechnol.">
        <title>The complete genome sequence of Bacillus licheniformis DSM13, an organism with great industrial potential.</title>
        <authorList>
            <person name="Veith B."/>
            <person name="Herzberg C."/>
            <person name="Steckel S."/>
            <person name="Feesche J."/>
            <person name="Maurer K.H."/>
            <person name="Ehrenreich P."/>
            <person name="Baeumer S."/>
            <person name="Henne A."/>
            <person name="Liesegang H."/>
            <person name="Merkl R."/>
            <person name="Ehrenreich A."/>
            <person name="Gottschalk G."/>
        </authorList>
    </citation>
    <scope>NUCLEOTIDE SEQUENCE [LARGE SCALE GENOMIC DNA]</scope>
    <source>
        <strain>ATCC 14580 / DSM 13 / JCM 2505 / CCUG 7422 / NBRC 12200 / NCIMB 9375 / NCTC 10341 / NRRL NRS-1264 / Gibson 46</strain>
    </source>
</reference>
<reference key="2">
    <citation type="journal article" date="2004" name="Genome Biol.">
        <title>Complete genome sequence of the industrial bacterium Bacillus licheniformis and comparisons with closely related Bacillus species.</title>
        <authorList>
            <person name="Rey M.W."/>
            <person name="Ramaiya P."/>
            <person name="Nelson B.A."/>
            <person name="Brody-Karpin S.D."/>
            <person name="Zaretsky E.J."/>
            <person name="Tang M."/>
            <person name="Lopez de Leon A."/>
            <person name="Xiang H."/>
            <person name="Gusti V."/>
            <person name="Clausen I.G."/>
            <person name="Olsen P.B."/>
            <person name="Rasmussen M.D."/>
            <person name="Andersen J.T."/>
            <person name="Joergensen P.L."/>
            <person name="Larsen T.S."/>
            <person name="Sorokin A."/>
            <person name="Bolotin A."/>
            <person name="Lapidus A."/>
            <person name="Galleron N."/>
            <person name="Ehrlich S.D."/>
            <person name="Berka R.M."/>
        </authorList>
    </citation>
    <scope>NUCLEOTIDE SEQUENCE [LARGE SCALE GENOMIC DNA]</scope>
    <source>
        <strain>ATCC 14580 / DSM 13 / JCM 2505 / CCUG 7422 / NBRC 12200 / NCIMB 9375 / NCTC 10341 / NRRL NRS-1264 / Gibson 46</strain>
    </source>
</reference>
<organism>
    <name type="scientific">Bacillus licheniformis (strain ATCC 14580 / DSM 13 / JCM 2505 / CCUG 7422 / NBRC 12200 / NCIMB 9375 / NCTC 10341 / NRRL NRS-1264 / Gibson 46)</name>
    <dbReference type="NCBI Taxonomy" id="279010"/>
    <lineage>
        <taxon>Bacteria</taxon>
        <taxon>Bacillati</taxon>
        <taxon>Bacillota</taxon>
        <taxon>Bacilli</taxon>
        <taxon>Bacillales</taxon>
        <taxon>Bacillaceae</taxon>
        <taxon>Bacillus</taxon>
    </lineage>
</organism>
<keyword id="KW-0131">Cell cycle</keyword>
<keyword id="KW-0132">Cell division</keyword>
<keyword id="KW-1003">Cell membrane</keyword>
<keyword id="KW-0133">Cell shape</keyword>
<keyword id="KW-0961">Cell wall biogenesis/degradation</keyword>
<keyword id="KW-0328">Glycosyltransferase</keyword>
<keyword id="KW-0472">Membrane</keyword>
<keyword id="KW-0573">Peptidoglycan synthesis</keyword>
<keyword id="KW-1185">Reference proteome</keyword>
<keyword id="KW-0808">Transferase</keyword>